<sequence>VEWTDGERTAILTLWKKINVEEIGAQAMGRLLIVYPWTHRHFASFGNLSTPSAIMSNDKVAKHGATVMGGLDKAIKNMDDIKNAYRDLSVMHSEKLHVDPDNFRLLSECITLCVAAKFGPKEFNADVHEAWYKFLMAVTSALARQYH</sequence>
<name>HBBA_GYMUN</name>
<reference evidence="4" key="1">
    <citation type="journal article" date="2001" name="Eur. J. Biochem.">
        <title>The hemoglobin system of the brown moray Gymnothorax unicolor: structure/function relationships.</title>
        <authorList>
            <person name="Tamburrini M."/>
            <person name="Verde C."/>
            <person name="Olianas A."/>
            <person name="Giardina B."/>
            <person name="Corda M."/>
            <person name="Sanna M.T."/>
            <person name="Fais A."/>
            <person name="Deiana A.M."/>
            <person name="di Prisco G."/>
            <person name="Pellegrini M."/>
        </authorList>
    </citation>
    <scope>PROTEIN SEQUENCE</scope>
    <source>
        <tissue evidence="3">Erythrocyte</tissue>
    </source>
</reference>
<keyword id="KW-0903">Direct protein sequencing</keyword>
<keyword id="KW-0349">Heme</keyword>
<keyword id="KW-0408">Iron</keyword>
<keyword id="KW-0479">Metal-binding</keyword>
<keyword id="KW-0561">Oxygen transport</keyword>
<keyword id="KW-0813">Transport</keyword>
<dbReference type="SMR" id="P84206"/>
<dbReference type="GO" id="GO:0072562">
    <property type="term" value="C:blood microparticle"/>
    <property type="evidence" value="ECO:0007669"/>
    <property type="project" value="TreeGrafter"/>
</dbReference>
<dbReference type="GO" id="GO:0031838">
    <property type="term" value="C:haptoglobin-hemoglobin complex"/>
    <property type="evidence" value="ECO:0007669"/>
    <property type="project" value="TreeGrafter"/>
</dbReference>
<dbReference type="GO" id="GO:0005833">
    <property type="term" value="C:hemoglobin complex"/>
    <property type="evidence" value="ECO:0007669"/>
    <property type="project" value="InterPro"/>
</dbReference>
<dbReference type="GO" id="GO:0031720">
    <property type="term" value="F:haptoglobin binding"/>
    <property type="evidence" value="ECO:0007669"/>
    <property type="project" value="TreeGrafter"/>
</dbReference>
<dbReference type="GO" id="GO:0020037">
    <property type="term" value="F:heme binding"/>
    <property type="evidence" value="ECO:0007669"/>
    <property type="project" value="InterPro"/>
</dbReference>
<dbReference type="GO" id="GO:0046872">
    <property type="term" value="F:metal ion binding"/>
    <property type="evidence" value="ECO:0007669"/>
    <property type="project" value="UniProtKB-KW"/>
</dbReference>
<dbReference type="GO" id="GO:0043177">
    <property type="term" value="F:organic acid binding"/>
    <property type="evidence" value="ECO:0007669"/>
    <property type="project" value="TreeGrafter"/>
</dbReference>
<dbReference type="GO" id="GO:0019825">
    <property type="term" value="F:oxygen binding"/>
    <property type="evidence" value="ECO:0007669"/>
    <property type="project" value="InterPro"/>
</dbReference>
<dbReference type="GO" id="GO:0005344">
    <property type="term" value="F:oxygen carrier activity"/>
    <property type="evidence" value="ECO:0007669"/>
    <property type="project" value="UniProtKB-KW"/>
</dbReference>
<dbReference type="GO" id="GO:0004601">
    <property type="term" value="F:peroxidase activity"/>
    <property type="evidence" value="ECO:0007669"/>
    <property type="project" value="TreeGrafter"/>
</dbReference>
<dbReference type="GO" id="GO:0042744">
    <property type="term" value="P:hydrogen peroxide catabolic process"/>
    <property type="evidence" value="ECO:0007669"/>
    <property type="project" value="TreeGrafter"/>
</dbReference>
<dbReference type="CDD" id="cd08925">
    <property type="entry name" value="Hb-beta-like"/>
    <property type="match status" value="1"/>
</dbReference>
<dbReference type="FunFam" id="1.10.490.10:FF:000001">
    <property type="entry name" value="Hemoglobin subunit beta"/>
    <property type="match status" value="1"/>
</dbReference>
<dbReference type="Gene3D" id="1.10.490.10">
    <property type="entry name" value="Globins"/>
    <property type="match status" value="1"/>
</dbReference>
<dbReference type="InterPro" id="IPR000971">
    <property type="entry name" value="Globin"/>
</dbReference>
<dbReference type="InterPro" id="IPR009050">
    <property type="entry name" value="Globin-like_sf"/>
</dbReference>
<dbReference type="InterPro" id="IPR012292">
    <property type="entry name" value="Globin/Proto"/>
</dbReference>
<dbReference type="InterPro" id="IPR002337">
    <property type="entry name" value="Hemoglobin_b"/>
</dbReference>
<dbReference type="InterPro" id="IPR050056">
    <property type="entry name" value="Hemoglobin_oxygen_transport"/>
</dbReference>
<dbReference type="PANTHER" id="PTHR11442">
    <property type="entry name" value="HEMOGLOBIN FAMILY MEMBER"/>
    <property type="match status" value="1"/>
</dbReference>
<dbReference type="PANTHER" id="PTHR11442:SF102">
    <property type="entry name" value="HEMOGLOBIN SUBUNIT BETA-1-RELATED"/>
    <property type="match status" value="1"/>
</dbReference>
<dbReference type="Pfam" id="PF00042">
    <property type="entry name" value="Globin"/>
    <property type="match status" value="1"/>
</dbReference>
<dbReference type="PRINTS" id="PR00814">
    <property type="entry name" value="BETAHAEM"/>
</dbReference>
<dbReference type="SUPFAM" id="SSF46458">
    <property type="entry name" value="Globin-like"/>
    <property type="match status" value="1"/>
</dbReference>
<dbReference type="PROSITE" id="PS01033">
    <property type="entry name" value="GLOBIN"/>
    <property type="match status" value="1"/>
</dbReference>
<comment type="function">
    <text>Involved in oxygen transport from gills to the various peripheral tissues.</text>
</comment>
<comment type="subunit">
    <text evidence="4">Heterotetramer of two alpha chains and two beta chains.</text>
</comment>
<comment type="tissue specificity">
    <text evidence="4">Red blood cells.</text>
</comment>
<comment type="miscellaneous">
    <text>This fish has two hemoglobins: cathodic and anodic. Cathodic Hb has high oxygen affinity, low cooperativity and displays a small reverse Bohr effect. Anodic Hb has low oxygen affinity and cooperativity and displays a normal Bohr effect.</text>
</comment>
<comment type="similarity">
    <text evidence="2">Belongs to the globin family.</text>
</comment>
<accession>P84206</accession>
<protein>
    <recommendedName>
        <fullName>Hemoglobin anodic subunit beta</fullName>
    </recommendedName>
    <alternativeName>
        <fullName>Hemoglobin anodic beta chain</fullName>
    </alternativeName>
</protein>
<organism>
    <name type="scientific">Gymnothorax unicolor</name>
    <name type="common">Brown moray</name>
    <name type="synonym">Muraenophis unicolor</name>
    <dbReference type="NCBI Taxonomy" id="296138"/>
    <lineage>
        <taxon>Eukaryota</taxon>
        <taxon>Metazoa</taxon>
        <taxon>Chordata</taxon>
        <taxon>Craniata</taxon>
        <taxon>Vertebrata</taxon>
        <taxon>Euteleostomi</taxon>
        <taxon>Actinopterygii</taxon>
        <taxon>Neopterygii</taxon>
        <taxon>Teleostei</taxon>
        <taxon>Anguilliformes</taxon>
        <taxon>Muraenidae</taxon>
        <taxon>Gymnothorax</taxon>
    </lineage>
</organism>
<feature type="chain" id="PRO_0000052968" description="Hemoglobin anodic subunit beta">
    <location>
        <begin position="1"/>
        <end position="147"/>
    </location>
</feature>
<feature type="domain" description="Globin" evidence="2">
    <location>
        <begin position="2"/>
        <end position="147"/>
    </location>
</feature>
<feature type="binding site" description="distal binding residue" evidence="1 2">
    <location>
        <position position="63"/>
    </location>
    <ligand>
        <name>heme b</name>
        <dbReference type="ChEBI" id="CHEBI:60344"/>
    </ligand>
    <ligandPart>
        <name>Fe</name>
        <dbReference type="ChEBI" id="CHEBI:18248"/>
    </ligandPart>
</feature>
<feature type="binding site" description="proximal binding residue" evidence="1 2">
    <location>
        <position position="92"/>
    </location>
    <ligand>
        <name>heme b</name>
        <dbReference type="ChEBI" id="CHEBI:60344"/>
    </ligand>
    <ligandPart>
        <name>Fe</name>
        <dbReference type="ChEBI" id="CHEBI:18248"/>
    </ligandPart>
</feature>
<evidence type="ECO:0000250" key="1">
    <source>
        <dbReference type="UniProtKB" id="P56251"/>
    </source>
</evidence>
<evidence type="ECO:0000255" key="2">
    <source>
        <dbReference type="PROSITE-ProRule" id="PRU00238"/>
    </source>
</evidence>
<evidence type="ECO:0000269" key="3">
    <source>
    </source>
</evidence>
<evidence type="ECO:0000305" key="4"/>
<proteinExistence type="evidence at protein level"/>